<dbReference type="EMBL" id="U10114">
    <property type="protein sequence ID" value="AAA59067.1"/>
    <property type="molecule type" value="mRNA"/>
</dbReference>
<dbReference type="SMR" id="Q90615"/>
<dbReference type="FunCoup" id="Q90615">
    <property type="interactions" value="87"/>
</dbReference>
<dbReference type="STRING" id="9031.ENSGALP00000023976"/>
<dbReference type="GlyCosmos" id="Q90615">
    <property type="glycosylation" value="4 sites, No reported glycans"/>
</dbReference>
<dbReference type="GlyGen" id="Q90615">
    <property type="glycosylation" value="4 sites"/>
</dbReference>
<dbReference type="PaxDb" id="9031-ENSGALP00000023976"/>
<dbReference type="VEuPathDB" id="HostDB:geneid_395951"/>
<dbReference type="eggNOG" id="KOG3637">
    <property type="taxonomic scope" value="Eukaryota"/>
</dbReference>
<dbReference type="InParanoid" id="Q90615"/>
<dbReference type="OrthoDB" id="5317514at2759"/>
<dbReference type="PhylomeDB" id="Q90615"/>
<dbReference type="Proteomes" id="UP000000539">
    <property type="component" value="Unassembled WGS sequence"/>
</dbReference>
<dbReference type="GO" id="GO:0062023">
    <property type="term" value="C:collagen-containing extracellular matrix"/>
    <property type="evidence" value="ECO:0000318"/>
    <property type="project" value="GO_Central"/>
</dbReference>
<dbReference type="GO" id="GO:0016020">
    <property type="term" value="C:membrane"/>
    <property type="evidence" value="ECO:0007669"/>
    <property type="project" value="UniProtKB-SubCell"/>
</dbReference>
<dbReference type="GO" id="GO:0019211">
    <property type="term" value="F:phosphatase activator activity"/>
    <property type="evidence" value="ECO:0000250"/>
    <property type="project" value="UniProtKB"/>
</dbReference>
<dbReference type="GO" id="GO:0007155">
    <property type="term" value="P:cell adhesion"/>
    <property type="evidence" value="ECO:0007669"/>
    <property type="project" value="UniProtKB-KW"/>
</dbReference>
<dbReference type="GO" id="GO:0030198">
    <property type="term" value="P:extracellular matrix organization"/>
    <property type="evidence" value="ECO:0000318"/>
    <property type="project" value="GO_Central"/>
</dbReference>
<dbReference type="GO" id="GO:0007229">
    <property type="term" value="P:integrin-mediated signaling pathway"/>
    <property type="evidence" value="ECO:0007669"/>
    <property type="project" value="UniProtKB-KW"/>
</dbReference>
<dbReference type="GO" id="GO:0008285">
    <property type="term" value="P:negative regulation of cell population proliferation"/>
    <property type="evidence" value="ECO:0000250"/>
    <property type="project" value="UniProtKB"/>
</dbReference>
<dbReference type="GO" id="GO:0042059">
    <property type="term" value="P:negative regulation of epidermal growth factor receptor signaling pathway"/>
    <property type="evidence" value="ECO:0000250"/>
    <property type="project" value="UniProtKB"/>
</dbReference>
<dbReference type="CDD" id="cd01469">
    <property type="entry name" value="vWA_integrins_alpha_subunit"/>
    <property type="match status" value="1"/>
</dbReference>
<dbReference type="FunFam" id="3.40.50.410:FF:000012">
    <property type="entry name" value="Integrin, alpha 10"/>
    <property type="match status" value="1"/>
</dbReference>
<dbReference type="Gene3D" id="3.40.50.410">
    <property type="entry name" value="von Willebrand factor, type A domain"/>
    <property type="match status" value="1"/>
</dbReference>
<dbReference type="InterPro" id="IPR050525">
    <property type="entry name" value="ECM_Assembly_Org"/>
</dbReference>
<dbReference type="InterPro" id="IPR002035">
    <property type="entry name" value="VWF_A"/>
</dbReference>
<dbReference type="InterPro" id="IPR036465">
    <property type="entry name" value="vWFA_dom_sf"/>
</dbReference>
<dbReference type="PANTHER" id="PTHR24020">
    <property type="entry name" value="COLLAGEN ALPHA"/>
    <property type="match status" value="1"/>
</dbReference>
<dbReference type="PANTHER" id="PTHR24020:SF84">
    <property type="entry name" value="VWFA DOMAIN-CONTAINING PROTEIN"/>
    <property type="match status" value="1"/>
</dbReference>
<dbReference type="Pfam" id="PF00092">
    <property type="entry name" value="VWA"/>
    <property type="match status" value="1"/>
</dbReference>
<dbReference type="PRINTS" id="PR00453">
    <property type="entry name" value="VWFADOMAIN"/>
</dbReference>
<dbReference type="SMART" id="SM00327">
    <property type="entry name" value="VWA"/>
    <property type="match status" value="1"/>
</dbReference>
<dbReference type="SUPFAM" id="SSF53300">
    <property type="entry name" value="vWA-like"/>
    <property type="match status" value="1"/>
</dbReference>
<dbReference type="PROSITE" id="PS50234">
    <property type="entry name" value="VWFA"/>
    <property type="match status" value="1"/>
</dbReference>
<gene>
    <name type="primary">ITGA1</name>
</gene>
<reference key="1">
    <citation type="journal article" date="1994" name="J. Biol. Chem.">
        <title>The role of the I domain in ligand binding of the human integrin alpha 1 beta 1.</title>
        <authorList>
            <person name="Kern A."/>
            <person name="Briesewitz R."/>
            <person name="Bank I."/>
            <person name="Marcantonio E.E."/>
        </authorList>
    </citation>
    <scope>NUCLEOTIDE SEQUENCE [MRNA]</scope>
    <source>
        <tissue>Gizzard</tissue>
    </source>
</reference>
<organism>
    <name type="scientific">Gallus gallus</name>
    <name type="common">Chicken</name>
    <dbReference type="NCBI Taxonomy" id="9031"/>
    <lineage>
        <taxon>Eukaryota</taxon>
        <taxon>Metazoa</taxon>
        <taxon>Chordata</taxon>
        <taxon>Craniata</taxon>
        <taxon>Vertebrata</taxon>
        <taxon>Euteleostomi</taxon>
        <taxon>Archelosauria</taxon>
        <taxon>Archosauria</taxon>
        <taxon>Dinosauria</taxon>
        <taxon>Saurischia</taxon>
        <taxon>Theropoda</taxon>
        <taxon>Coelurosauria</taxon>
        <taxon>Aves</taxon>
        <taxon>Neognathae</taxon>
        <taxon>Galloanserae</taxon>
        <taxon>Galliformes</taxon>
        <taxon>Phasianidae</taxon>
        <taxon>Phasianinae</taxon>
        <taxon>Gallus</taxon>
    </lineage>
</organism>
<name>ITA1_CHICK</name>
<comment type="function">
    <text evidence="1">Integrin alpha-1/beta-1 is a receptor for laminin and collagen. It recognizes the proline-hydroxylated sequence G-F-P-G-E-R in collagen. Involved in anchorage-dependent, negative regulation of EGF-stimulated cell growth (By similarity).</text>
</comment>
<comment type="subunit">
    <text>Heterodimer of an alpha and a beta subunit. Alpha-1 associates with beta-1.</text>
</comment>
<comment type="subcellular location">
    <subcellularLocation>
        <location>Membrane</location>
        <topology>Single-pass type I membrane protein</topology>
    </subcellularLocation>
</comment>
<comment type="domain">
    <text>The integrin I-domain (insert) is a VWFA domain. Integrins with I-domains do not undergo protease cleavage.</text>
</comment>
<comment type="similarity">
    <text evidence="4">Belongs to the integrin alpha chain family.</text>
</comment>
<evidence type="ECO:0000250" key="1"/>
<evidence type="ECO:0000255" key="2"/>
<evidence type="ECO:0000255" key="3">
    <source>
        <dbReference type="PROSITE-ProRule" id="PRU00219"/>
    </source>
</evidence>
<evidence type="ECO:0000305" key="4"/>
<sequence length="285" mass="31503">ENMTFGTTLVTNPKGGFLACGPLYAYKCGRLHYTTGVCSNVSSTFETVKAVAPSVQECKTQLDIVIVLDGSNSIYPWESVTAFLNSLLRNMDIGPQQTQVGIVQYGQTVVHEFYLNTYSTTEEVMDAALRIRQRGGTQTMTALGIDTAREEAFTEAHGARRGVQKVMVIVTDGESHDNYRLQEVIDKCEDENIQRFAIAILGSYSRGNLSTEKFVEEIKSIASKPTEKHFFNVSDELALVTIVEALGERIFALEATTDQQAASFEMEMSQAGFSAHYSQDWVMLG</sequence>
<proteinExistence type="evidence at transcript level"/>
<feature type="chain" id="PRO_0000174216" description="Integrin alpha-1">
    <location>
        <begin position="1" status="less than"/>
        <end position="285" status="greater than"/>
    </location>
</feature>
<feature type="topological domain" description="Extracellular" evidence="2">
    <location>
        <begin position="1" status="less than"/>
        <end position="285" status="greater than"/>
    </location>
</feature>
<feature type="domain" description="VWFA" evidence="3">
    <location>
        <begin position="66"/>
        <end position="279"/>
    </location>
</feature>
<feature type="glycosylation site" description="N-linked (GlcNAc...) asparagine" evidence="2">
    <location>
        <position position="2"/>
    </location>
</feature>
<feature type="glycosylation site" description="N-linked (GlcNAc...) asparagine" evidence="2">
    <location>
        <position position="40"/>
    </location>
</feature>
<feature type="glycosylation site" description="N-linked (GlcNAc...) asparagine" evidence="2">
    <location>
        <position position="208"/>
    </location>
</feature>
<feature type="glycosylation site" description="N-linked (GlcNAc...) asparagine" evidence="2">
    <location>
        <position position="232"/>
    </location>
</feature>
<feature type="non-terminal residue">
    <location>
        <position position="1"/>
    </location>
</feature>
<feature type="non-terminal residue">
    <location>
        <position position="285"/>
    </location>
</feature>
<accession>Q90615</accession>
<protein>
    <recommendedName>
        <fullName>Integrin alpha-1</fullName>
    </recommendedName>
    <alternativeName>
        <fullName>Laminin and collagen receptor</fullName>
    </alternativeName>
    <alternativeName>
        <fullName>VLA-1</fullName>
    </alternativeName>
</protein>
<keyword id="KW-0130">Cell adhesion</keyword>
<keyword id="KW-0325">Glycoprotein</keyword>
<keyword id="KW-0401">Integrin</keyword>
<keyword id="KW-0472">Membrane</keyword>
<keyword id="KW-0675">Receptor</keyword>
<keyword id="KW-1185">Reference proteome</keyword>
<keyword id="KW-0812">Transmembrane</keyword>